<keyword id="KW-0028">Amino-acid biosynthesis</keyword>
<keyword id="KW-0378">Hydrolase</keyword>
<keyword id="KW-0486">Methionine biosynthesis</keyword>
<keyword id="KW-1185">Reference proteome</keyword>
<gene>
    <name evidence="1" type="primary">mtnN</name>
    <name type="ordered locus">SbBS512_E0151</name>
</gene>
<dbReference type="EC" id="3.2.2.9" evidence="1"/>
<dbReference type="EMBL" id="CP001063">
    <property type="protein sequence ID" value="ACD07645.1"/>
    <property type="molecule type" value="Genomic_DNA"/>
</dbReference>
<dbReference type="RefSeq" id="WP_000689844.1">
    <property type="nucleotide sequence ID" value="NC_010658.1"/>
</dbReference>
<dbReference type="SMR" id="B2U303"/>
<dbReference type="STRING" id="344609.SbBS512_E0151"/>
<dbReference type="GeneID" id="93777267"/>
<dbReference type="KEGG" id="sbc:SbBS512_E0151"/>
<dbReference type="HOGENOM" id="CLU_031248_2_2_6"/>
<dbReference type="UniPathway" id="UPA00904">
    <property type="reaction ID" value="UER00871"/>
</dbReference>
<dbReference type="Proteomes" id="UP000001030">
    <property type="component" value="Chromosome"/>
</dbReference>
<dbReference type="GO" id="GO:0005829">
    <property type="term" value="C:cytosol"/>
    <property type="evidence" value="ECO:0007669"/>
    <property type="project" value="TreeGrafter"/>
</dbReference>
<dbReference type="GO" id="GO:0008782">
    <property type="term" value="F:adenosylhomocysteine nucleosidase activity"/>
    <property type="evidence" value="ECO:0007669"/>
    <property type="project" value="UniProtKB-UniRule"/>
</dbReference>
<dbReference type="GO" id="GO:0008930">
    <property type="term" value="F:methylthioadenosine nucleosidase activity"/>
    <property type="evidence" value="ECO:0007669"/>
    <property type="project" value="UniProtKB-UniRule"/>
</dbReference>
<dbReference type="GO" id="GO:0019509">
    <property type="term" value="P:L-methionine salvage from methylthioadenosine"/>
    <property type="evidence" value="ECO:0007669"/>
    <property type="project" value="UniProtKB-UniRule"/>
</dbReference>
<dbReference type="GO" id="GO:0019284">
    <property type="term" value="P:L-methionine salvage from S-adenosylmethionine"/>
    <property type="evidence" value="ECO:0007669"/>
    <property type="project" value="TreeGrafter"/>
</dbReference>
<dbReference type="GO" id="GO:0046124">
    <property type="term" value="P:purine deoxyribonucleoside catabolic process"/>
    <property type="evidence" value="ECO:0007669"/>
    <property type="project" value="UniProtKB-UniRule"/>
</dbReference>
<dbReference type="CDD" id="cd09008">
    <property type="entry name" value="MTAN"/>
    <property type="match status" value="1"/>
</dbReference>
<dbReference type="FunFam" id="3.40.50.1580:FF:000001">
    <property type="entry name" value="MTA/SAH nucleosidase family protein"/>
    <property type="match status" value="1"/>
</dbReference>
<dbReference type="Gene3D" id="3.40.50.1580">
    <property type="entry name" value="Nucleoside phosphorylase domain"/>
    <property type="match status" value="1"/>
</dbReference>
<dbReference type="HAMAP" id="MF_01684">
    <property type="entry name" value="Salvage_MtnN"/>
    <property type="match status" value="1"/>
</dbReference>
<dbReference type="InterPro" id="IPR010049">
    <property type="entry name" value="MTA_SAH_Nsdase"/>
</dbReference>
<dbReference type="InterPro" id="IPR000845">
    <property type="entry name" value="Nucleoside_phosphorylase_d"/>
</dbReference>
<dbReference type="InterPro" id="IPR035994">
    <property type="entry name" value="Nucleoside_phosphorylase_sf"/>
</dbReference>
<dbReference type="NCBIfam" id="TIGR01704">
    <property type="entry name" value="MTA_SAH-Nsdase"/>
    <property type="match status" value="1"/>
</dbReference>
<dbReference type="NCBIfam" id="NF004079">
    <property type="entry name" value="PRK05584.1"/>
    <property type="match status" value="1"/>
</dbReference>
<dbReference type="PANTHER" id="PTHR46832">
    <property type="entry name" value="5'-METHYLTHIOADENOSINE/S-ADENOSYLHOMOCYSTEINE NUCLEOSIDASE"/>
    <property type="match status" value="1"/>
</dbReference>
<dbReference type="PANTHER" id="PTHR46832:SF1">
    <property type="entry name" value="5'-METHYLTHIOADENOSINE_S-ADENOSYLHOMOCYSTEINE NUCLEOSIDASE"/>
    <property type="match status" value="1"/>
</dbReference>
<dbReference type="Pfam" id="PF01048">
    <property type="entry name" value="PNP_UDP_1"/>
    <property type="match status" value="1"/>
</dbReference>
<dbReference type="SUPFAM" id="SSF53167">
    <property type="entry name" value="Purine and uridine phosphorylases"/>
    <property type="match status" value="1"/>
</dbReference>
<reference key="1">
    <citation type="submission" date="2008-05" db="EMBL/GenBank/DDBJ databases">
        <title>Complete sequence of Shigella boydii serotype 18 strain BS512.</title>
        <authorList>
            <person name="Rasko D.A."/>
            <person name="Rosovitz M."/>
            <person name="Maurelli A.T."/>
            <person name="Myers G."/>
            <person name="Seshadri R."/>
            <person name="Cer R."/>
            <person name="Jiang L."/>
            <person name="Ravel J."/>
            <person name="Sebastian Y."/>
        </authorList>
    </citation>
    <scope>NUCLEOTIDE SEQUENCE [LARGE SCALE GENOMIC DNA]</scope>
    <source>
        <strain>CDC 3083-94 / BS512</strain>
    </source>
</reference>
<organism>
    <name type="scientific">Shigella boydii serotype 18 (strain CDC 3083-94 / BS512)</name>
    <dbReference type="NCBI Taxonomy" id="344609"/>
    <lineage>
        <taxon>Bacteria</taxon>
        <taxon>Pseudomonadati</taxon>
        <taxon>Pseudomonadota</taxon>
        <taxon>Gammaproteobacteria</taxon>
        <taxon>Enterobacterales</taxon>
        <taxon>Enterobacteriaceae</taxon>
        <taxon>Shigella</taxon>
    </lineage>
</organism>
<name>MTNN_SHIB3</name>
<sequence length="232" mass="24354">MKIGIIGAMEEEVTLLRDKIENRQTISLGGCEIYTGQLNGTEVALLKSGIGKVAAALGATLLLEHCKPDVIINTGSAGGLAPTLKVGDIVVSDEARYHDADVTAFGYEYGQLPGCPAGFKADDKLIAAAEACIAELNLNAVRGLIVSGDAFINGSVGLAKIRHNFPQAIAVEMEATAIAHVCHNFNVPFVVVRAISDVADQQSHLSFDEFLAVAAKQSSLMVESLVQKLAHG</sequence>
<accession>B2U303</accession>
<proteinExistence type="inferred from homology"/>
<comment type="function">
    <text evidence="1">Catalyzes the irreversible cleavage of the glycosidic bond in both 5'-methylthioadenosine (MTA) and S-adenosylhomocysteine (SAH/AdoHcy) to adenine and the corresponding thioribose, 5'-methylthioribose and S-ribosylhomocysteine, respectively. Also cleaves 5'-deoxyadenosine, a toxic by-product of radical S-adenosylmethionine (SAM) enzymes, into 5-deoxyribose and adenine. Thus, is required for in vivo function of the radical SAM enzymes biotin synthase and lipoic acid synthase, that are inhibited by 5'-deoxyadenosine accumulation.</text>
</comment>
<comment type="catalytic activity">
    <reaction evidence="1">
        <text>S-adenosyl-L-homocysteine + H2O = S-(5-deoxy-D-ribos-5-yl)-L-homocysteine + adenine</text>
        <dbReference type="Rhea" id="RHEA:17805"/>
        <dbReference type="ChEBI" id="CHEBI:15377"/>
        <dbReference type="ChEBI" id="CHEBI:16708"/>
        <dbReference type="ChEBI" id="CHEBI:57856"/>
        <dbReference type="ChEBI" id="CHEBI:58195"/>
        <dbReference type="EC" id="3.2.2.9"/>
    </reaction>
</comment>
<comment type="catalytic activity">
    <reaction evidence="1">
        <text>S-methyl-5'-thioadenosine + H2O = 5-(methylsulfanyl)-D-ribose + adenine</text>
        <dbReference type="Rhea" id="RHEA:13617"/>
        <dbReference type="ChEBI" id="CHEBI:15377"/>
        <dbReference type="ChEBI" id="CHEBI:16708"/>
        <dbReference type="ChEBI" id="CHEBI:17509"/>
        <dbReference type="ChEBI" id="CHEBI:78440"/>
        <dbReference type="EC" id="3.2.2.9"/>
    </reaction>
</comment>
<comment type="catalytic activity">
    <reaction evidence="1">
        <text>5'-deoxyadenosine + H2O = 5-deoxy-D-ribose + adenine</text>
        <dbReference type="Rhea" id="RHEA:29859"/>
        <dbReference type="ChEBI" id="CHEBI:15377"/>
        <dbReference type="ChEBI" id="CHEBI:16708"/>
        <dbReference type="ChEBI" id="CHEBI:17319"/>
        <dbReference type="ChEBI" id="CHEBI:149540"/>
        <dbReference type="EC" id="3.2.2.9"/>
    </reaction>
    <physiologicalReaction direction="left-to-right" evidence="1">
        <dbReference type="Rhea" id="RHEA:29860"/>
    </physiologicalReaction>
</comment>
<comment type="pathway">
    <text evidence="1">Amino-acid biosynthesis; L-methionine biosynthesis via salvage pathway; S-methyl-5-thio-alpha-D-ribose 1-phosphate from S-methyl-5'-thioadenosine (hydrolase route): step 1/2.</text>
</comment>
<comment type="subunit">
    <text evidence="1">Homodimer.</text>
</comment>
<comment type="similarity">
    <text evidence="1">Belongs to the PNP/UDP phosphorylase family. MtnN subfamily.</text>
</comment>
<protein>
    <recommendedName>
        <fullName evidence="1">5'-methylthioadenosine/S-adenosylhomocysteine nucleosidase</fullName>
        <shortName evidence="1">MTA/SAH nucleosidase</shortName>
        <shortName evidence="1">MTAN</shortName>
        <ecNumber evidence="1">3.2.2.9</ecNumber>
    </recommendedName>
    <alternativeName>
        <fullName evidence="1">5'-deoxyadenosine nucleosidase</fullName>
        <shortName evidence="1">DOA nucleosidase</shortName>
        <shortName evidence="1">dAdo nucleosidase</shortName>
    </alternativeName>
    <alternativeName>
        <fullName evidence="1">5'-methylthioadenosine nucleosidase</fullName>
        <shortName evidence="1">MTA nucleosidase</shortName>
    </alternativeName>
    <alternativeName>
        <fullName evidence="1">S-adenosylhomocysteine nucleosidase</fullName>
        <shortName evidence="1">AdoHcy nucleosidase</shortName>
        <shortName evidence="1">SAH nucleosidase</shortName>
        <shortName evidence="1">SRH nucleosidase</shortName>
    </alternativeName>
</protein>
<evidence type="ECO:0000255" key="1">
    <source>
        <dbReference type="HAMAP-Rule" id="MF_01684"/>
    </source>
</evidence>
<feature type="chain" id="PRO_0000359356" description="5'-methylthioadenosine/S-adenosylhomocysteine nucleosidase">
    <location>
        <begin position="1"/>
        <end position="232"/>
    </location>
</feature>
<feature type="active site" description="Proton acceptor" evidence="1">
    <location>
        <position position="12"/>
    </location>
</feature>
<feature type="active site" description="Proton donor" evidence="1">
    <location>
        <position position="197"/>
    </location>
</feature>
<feature type="binding site" evidence="1">
    <location>
        <position position="78"/>
    </location>
    <ligand>
        <name>substrate</name>
    </ligand>
</feature>
<feature type="binding site" evidence="1">
    <location>
        <position position="152"/>
    </location>
    <ligand>
        <name>substrate</name>
    </ligand>
</feature>
<feature type="binding site" evidence="1">
    <location>
        <begin position="173"/>
        <end position="174"/>
    </location>
    <ligand>
        <name>substrate</name>
    </ligand>
</feature>